<keyword id="KW-0028">Amino-acid biosynthesis</keyword>
<keyword id="KW-0963">Cytoplasm</keyword>
<keyword id="KW-0554">One-carbon metabolism</keyword>
<keyword id="KW-0614">Plasmid</keyword>
<keyword id="KW-0663">Pyridoxal phosphate</keyword>
<keyword id="KW-1185">Reference proteome</keyword>
<keyword id="KW-0808">Transferase</keyword>
<comment type="function">
    <text evidence="1">Catalyzes the reversible interconversion of serine and glycine with tetrahydrofolate (THF) serving as the one-carbon carrier. This reaction serves as the major source of one-carbon groups required for the biosynthesis of purines, thymidylate, methionine, and other important biomolecules. Also exhibits THF-independent aldolase activity toward beta-hydroxyamino acids, producing glycine and aldehydes, via a retro-aldol mechanism.</text>
</comment>
<comment type="catalytic activity">
    <reaction evidence="1">
        <text>(6R)-5,10-methylene-5,6,7,8-tetrahydrofolate + glycine + H2O = (6S)-5,6,7,8-tetrahydrofolate + L-serine</text>
        <dbReference type="Rhea" id="RHEA:15481"/>
        <dbReference type="ChEBI" id="CHEBI:15377"/>
        <dbReference type="ChEBI" id="CHEBI:15636"/>
        <dbReference type="ChEBI" id="CHEBI:33384"/>
        <dbReference type="ChEBI" id="CHEBI:57305"/>
        <dbReference type="ChEBI" id="CHEBI:57453"/>
        <dbReference type="EC" id="2.1.2.1"/>
    </reaction>
</comment>
<comment type="cofactor">
    <cofactor evidence="1">
        <name>pyridoxal 5'-phosphate</name>
        <dbReference type="ChEBI" id="CHEBI:597326"/>
    </cofactor>
</comment>
<comment type="pathway">
    <text evidence="1">One-carbon metabolism; tetrahydrofolate interconversion.</text>
</comment>
<comment type="pathway">
    <text evidence="1">Amino-acid biosynthesis; glycine biosynthesis; glycine from L-serine: step 1/1.</text>
</comment>
<comment type="subunit">
    <text evidence="1">Homodimer.</text>
</comment>
<comment type="subcellular location">
    <subcellularLocation>
        <location evidence="1">Cytoplasm</location>
    </subcellularLocation>
</comment>
<comment type="similarity">
    <text evidence="1">Belongs to the SHMT family.</text>
</comment>
<evidence type="ECO:0000255" key="1">
    <source>
        <dbReference type="HAMAP-Rule" id="MF_00051"/>
    </source>
</evidence>
<accession>Q8XTQ1</accession>
<feature type="chain" id="PRO_0000113645" description="Serine hydroxymethyltransferase 2">
    <location>
        <begin position="1"/>
        <end position="424"/>
    </location>
</feature>
<feature type="binding site" evidence="1">
    <location>
        <position position="125"/>
    </location>
    <ligand>
        <name>(6S)-5,6,7,8-tetrahydrofolate</name>
        <dbReference type="ChEBI" id="CHEBI:57453"/>
    </ligand>
</feature>
<feature type="binding site" evidence="1">
    <location>
        <begin position="129"/>
        <end position="131"/>
    </location>
    <ligand>
        <name>(6S)-5,6,7,8-tetrahydrofolate</name>
        <dbReference type="ChEBI" id="CHEBI:57453"/>
    </ligand>
</feature>
<feature type="binding site" evidence="1">
    <location>
        <position position="250"/>
    </location>
    <ligand>
        <name>(6S)-5,6,7,8-tetrahydrofolate</name>
        <dbReference type="ChEBI" id="CHEBI:57453"/>
    </ligand>
</feature>
<feature type="site" description="Plays an important role in substrate specificity" evidence="1">
    <location>
        <position position="233"/>
    </location>
</feature>
<feature type="modified residue" description="N6-(pyridoxal phosphate)lysine" evidence="1">
    <location>
        <position position="234"/>
    </location>
</feature>
<name>GLYA2_RALN1</name>
<geneLocation type="plasmid">
    <name>megaplasmid Rsp</name>
</geneLocation>
<organism>
    <name type="scientific">Ralstonia nicotianae (strain ATCC BAA-1114 / GMI1000)</name>
    <name type="common">Ralstonia solanacearum</name>
    <dbReference type="NCBI Taxonomy" id="267608"/>
    <lineage>
        <taxon>Bacteria</taxon>
        <taxon>Pseudomonadati</taxon>
        <taxon>Pseudomonadota</taxon>
        <taxon>Betaproteobacteria</taxon>
        <taxon>Burkholderiales</taxon>
        <taxon>Burkholderiaceae</taxon>
        <taxon>Ralstonia</taxon>
        <taxon>Ralstonia solanacearum species complex</taxon>
    </lineage>
</organism>
<dbReference type="EC" id="2.1.2.1" evidence="1"/>
<dbReference type="EMBL" id="AL646053">
    <property type="protein sequence ID" value="CAD17206.1"/>
    <property type="molecule type" value="Genomic_DNA"/>
</dbReference>
<dbReference type="RefSeq" id="WP_011003374.1">
    <property type="nucleotide sequence ID" value="NC_003296.1"/>
</dbReference>
<dbReference type="SMR" id="Q8XTQ1"/>
<dbReference type="STRING" id="267608.RSp0055"/>
<dbReference type="EnsemblBacteria" id="CAD17206">
    <property type="protein sequence ID" value="CAD17206"/>
    <property type="gene ID" value="RSp0055"/>
</dbReference>
<dbReference type="KEGG" id="rso:RSp0055"/>
<dbReference type="PATRIC" id="fig|267608.8.peg.3538"/>
<dbReference type="eggNOG" id="COG0112">
    <property type="taxonomic scope" value="Bacteria"/>
</dbReference>
<dbReference type="HOGENOM" id="CLU_022477_2_1_4"/>
<dbReference type="UniPathway" id="UPA00193"/>
<dbReference type="UniPathway" id="UPA00288">
    <property type="reaction ID" value="UER01023"/>
</dbReference>
<dbReference type="Proteomes" id="UP000001436">
    <property type="component" value="Plasmid megaplasmid Rsp"/>
</dbReference>
<dbReference type="GO" id="GO:0005829">
    <property type="term" value="C:cytosol"/>
    <property type="evidence" value="ECO:0007669"/>
    <property type="project" value="TreeGrafter"/>
</dbReference>
<dbReference type="GO" id="GO:0004372">
    <property type="term" value="F:glycine hydroxymethyltransferase activity"/>
    <property type="evidence" value="ECO:0007669"/>
    <property type="project" value="UniProtKB-UniRule"/>
</dbReference>
<dbReference type="GO" id="GO:0030170">
    <property type="term" value="F:pyridoxal phosphate binding"/>
    <property type="evidence" value="ECO:0007669"/>
    <property type="project" value="UniProtKB-UniRule"/>
</dbReference>
<dbReference type="GO" id="GO:0019264">
    <property type="term" value="P:glycine biosynthetic process from serine"/>
    <property type="evidence" value="ECO:0007669"/>
    <property type="project" value="UniProtKB-UniRule"/>
</dbReference>
<dbReference type="GO" id="GO:0035999">
    <property type="term" value="P:tetrahydrofolate interconversion"/>
    <property type="evidence" value="ECO:0007669"/>
    <property type="project" value="UniProtKB-UniRule"/>
</dbReference>
<dbReference type="CDD" id="cd00378">
    <property type="entry name" value="SHMT"/>
    <property type="match status" value="1"/>
</dbReference>
<dbReference type="FunFam" id="3.40.640.10:FF:000001">
    <property type="entry name" value="Serine hydroxymethyltransferase"/>
    <property type="match status" value="1"/>
</dbReference>
<dbReference type="Gene3D" id="3.90.1150.10">
    <property type="entry name" value="Aspartate Aminotransferase, domain 1"/>
    <property type="match status" value="1"/>
</dbReference>
<dbReference type="Gene3D" id="3.40.640.10">
    <property type="entry name" value="Type I PLP-dependent aspartate aminotransferase-like (Major domain)"/>
    <property type="match status" value="1"/>
</dbReference>
<dbReference type="HAMAP" id="MF_00051">
    <property type="entry name" value="SHMT"/>
    <property type="match status" value="1"/>
</dbReference>
<dbReference type="InterPro" id="IPR015424">
    <property type="entry name" value="PyrdxlP-dep_Trfase"/>
</dbReference>
<dbReference type="InterPro" id="IPR015421">
    <property type="entry name" value="PyrdxlP-dep_Trfase_major"/>
</dbReference>
<dbReference type="InterPro" id="IPR015422">
    <property type="entry name" value="PyrdxlP-dep_Trfase_small"/>
</dbReference>
<dbReference type="InterPro" id="IPR001085">
    <property type="entry name" value="Ser_HO-MeTrfase"/>
</dbReference>
<dbReference type="InterPro" id="IPR049943">
    <property type="entry name" value="Ser_HO-MeTrfase-like"/>
</dbReference>
<dbReference type="InterPro" id="IPR019798">
    <property type="entry name" value="Ser_HO-MeTrfase_PLP_BS"/>
</dbReference>
<dbReference type="InterPro" id="IPR039429">
    <property type="entry name" value="SHMT-like_dom"/>
</dbReference>
<dbReference type="NCBIfam" id="NF000586">
    <property type="entry name" value="PRK00011.1"/>
    <property type="match status" value="1"/>
</dbReference>
<dbReference type="PANTHER" id="PTHR11680">
    <property type="entry name" value="SERINE HYDROXYMETHYLTRANSFERASE"/>
    <property type="match status" value="1"/>
</dbReference>
<dbReference type="PANTHER" id="PTHR11680:SF35">
    <property type="entry name" value="SERINE HYDROXYMETHYLTRANSFERASE 1"/>
    <property type="match status" value="1"/>
</dbReference>
<dbReference type="Pfam" id="PF00464">
    <property type="entry name" value="SHMT"/>
    <property type="match status" value="1"/>
</dbReference>
<dbReference type="PIRSF" id="PIRSF000412">
    <property type="entry name" value="SHMT"/>
    <property type="match status" value="1"/>
</dbReference>
<dbReference type="SUPFAM" id="SSF53383">
    <property type="entry name" value="PLP-dependent transferases"/>
    <property type="match status" value="1"/>
</dbReference>
<dbReference type="PROSITE" id="PS00096">
    <property type="entry name" value="SHMT"/>
    <property type="match status" value="1"/>
</dbReference>
<sequence>MSNTQSFFSQSLAERDAPIRSSLLKELERQQSQVELIASENIVSRAVLEAQGSVLTNKYAEGYPGKRYYGGCEYADEVESLAIDRVKQLFNAGFANVQPHSGAQANGAVMLALTKPGDTVLGMSLDAGGHLTHGAKPALSGKWFNAMQYGVNRDTMLIDYEQVEKLAQEHKPSLIIAGFSAYPRKLDFARFRAIADSVGAKLMVDMAHIAGVIAAGRHDNPVDHAHVVTSTTHKTLRGPRGGFVLTNDEEIAKKINSAVFPGLQGGPLMHVIAGKAVAFGEALKPEFKTYIDSVLANAKALGEVLKAGGVDLVTGGTDNHLLLVDLRPKGLKGTQVEQALERAGITCNKNGIPFDTEKPTITSGIRLGTPAATTRGFGVAEFEQIGRLILEVFEALRANPDGDRATEHRVRSEIFALCDRFPIY</sequence>
<reference key="1">
    <citation type="journal article" date="2002" name="Nature">
        <title>Genome sequence of the plant pathogen Ralstonia solanacearum.</title>
        <authorList>
            <person name="Salanoubat M."/>
            <person name="Genin S."/>
            <person name="Artiguenave F."/>
            <person name="Gouzy J."/>
            <person name="Mangenot S."/>
            <person name="Arlat M."/>
            <person name="Billault A."/>
            <person name="Brottier P."/>
            <person name="Camus J.-C."/>
            <person name="Cattolico L."/>
            <person name="Chandler M."/>
            <person name="Choisne N."/>
            <person name="Claudel-Renard C."/>
            <person name="Cunnac S."/>
            <person name="Demange N."/>
            <person name="Gaspin C."/>
            <person name="Lavie M."/>
            <person name="Moisan A."/>
            <person name="Robert C."/>
            <person name="Saurin W."/>
            <person name="Schiex T."/>
            <person name="Siguier P."/>
            <person name="Thebault P."/>
            <person name="Whalen M."/>
            <person name="Wincker P."/>
            <person name="Levy M."/>
            <person name="Weissenbach J."/>
            <person name="Boucher C.A."/>
        </authorList>
    </citation>
    <scope>NUCLEOTIDE SEQUENCE [LARGE SCALE GENOMIC DNA]</scope>
    <source>
        <strain>ATCC BAA-1114 / GMI1000</strain>
    </source>
</reference>
<gene>
    <name evidence="1" type="primary">glyA2</name>
    <name type="ordered locus">RSp0055</name>
    <name type="ORF">RS02030</name>
</gene>
<protein>
    <recommendedName>
        <fullName evidence="1">Serine hydroxymethyltransferase 2</fullName>
        <shortName evidence="1">SHMT 2</shortName>
        <shortName evidence="1">Serine methylase 2</shortName>
        <ecNumber evidence="1">2.1.2.1</ecNumber>
    </recommendedName>
</protein>
<proteinExistence type="inferred from homology"/>